<accession>Q8NZX0</accession>
<gene>
    <name type="primary">glpO</name>
    <name type="synonym">glpA</name>
    <name type="ordered locus">spyM18_1695</name>
</gene>
<keyword id="KW-0963">Cytoplasm</keyword>
<keyword id="KW-0274">FAD</keyword>
<keyword id="KW-0285">Flavoprotein</keyword>
<keyword id="KW-0319">Glycerol metabolism</keyword>
<keyword id="KW-0560">Oxidoreductase</keyword>
<sequence>MEFSRETRRLALQKMQERDLDLLIIGGGITGAGVALQAAASGLDTGLIEMQDFAQGTSSRSTKLVHGGLRYLKQFDVEVVSDTVSERAVVQQIAPHIPKPDPMLLPVYDEPGSTFSMFRLKVAMDLYDLLAGVSNMPAANKVLTKEEVLKREPDLKQEGLLGGGVYLDFRNNDARLVIENIKRANRDGALIASHVKAEDFLLDDNSKIIGVKARDLLSDQEIIIKAKLVINTTGPWSDEIRQFSHKGQPIHQMRPTKGVHLVVDRQKLPVSQPVYVDTGLNDGRMVFVLPREEKTYFGTTDTDYTGDLEHPQVTQEDVDYLLGVVNNRFPNANVTIDDIESSWAGLRPLLSGNSASDYNGGNSGKVSDDSFDHLVDTVKAYINHEDSREAVEKAIKQVETSTSEKELDPSAVSRGSSFDRDENGLFTLAGGKITDYRKMAEGALTGIIQILKEEFGKSFKLINSKTYPVSGGEINPANVDSEIEAYAQLGTLSGLSMDDARYLANLYGSNAPKVFALTRQLTAAEGLSLAETLSLHYAMDYEMALKPTDYFLRRTNHLLFMRDSLDALIDPVIKEMAKHFEWSDQERVAQEDDLRRVIADNDLSALKGQQEG</sequence>
<name>GLPO_STRP8</name>
<dbReference type="EC" id="1.1.3.21"/>
<dbReference type="EMBL" id="AE009949">
    <property type="protein sequence ID" value="AAL98230.1"/>
    <property type="molecule type" value="Genomic_DNA"/>
</dbReference>
<dbReference type="RefSeq" id="WP_011018083.1">
    <property type="nucleotide sequence ID" value="NC_003485.1"/>
</dbReference>
<dbReference type="SMR" id="Q8NZX0"/>
<dbReference type="KEGG" id="spm:spyM18_1695"/>
<dbReference type="HOGENOM" id="CLU_015740_5_2_9"/>
<dbReference type="GO" id="GO:0005737">
    <property type="term" value="C:cytoplasm"/>
    <property type="evidence" value="ECO:0007669"/>
    <property type="project" value="UniProtKB-SubCell"/>
</dbReference>
<dbReference type="GO" id="GO:0004368">
    <property type="term" value="F:glycerol-3-phosphate dehydrogenase (quinone) activity"/>
    <property type="evidence" value="ECO:0007669"/>
    <property type="project" value="InterPro"/>
</dbReference>
<dbReference type="GO" id="GO:0004369">
    <property type="term" value="F:glycerol-3-phosphate oxidase activity"/>
    <property type="evidence" value="ECO:0007669"/>
    <property type="project" value="UniProtKB-EC"/>
</dbReference>
<dbReference type="GO" id="GO:0006071">
    <property type="term" value="P:glycerol metabolic process"/>
    <property type="evidence" value="ECO:0007669"/>
    <property type="project" value="UniProtKB-KW"/>
</dbReference>
<dbReference type="GO" id="GO:0046168">
    <property type="term" value="P:glycerol-3-phosphate catabolic process"/>
    <property type="evidence" value="ECO:0007669"/>
    <property type="project" value="TreeGrafter"/>
</dbReference>
<dbReference type="Gene3D" id="1.10.8.870">
    <property type="entry name" value="Alpha-glycerophosphate oxidase, cap domain"/>
    <property type="match status" value="1"/>
</dbReference>
<dbReference type="Gene3D" id="3.30.9.10">
    <property type="entry name" value="D-Amino Acid Oxidase, subunit A, domain 2"/>
    <property type="match status" value="1"/>
</dbReference>
<dbReference type="Gene3D" id="3.50.50.60">
    <property type="entry name" value="FAD/NAD(P)-binding domain"/>
    <property type="match status" value="1"/>
</dbReference>
<dbReference type="InterPro" id="IPR031656">
    <property type="entry name" value="DAO_C"/>
</dbReference>
<dbReference type="InterPro" id="IPR038299">
    <property type="entry name" value="DAO_C_sf"/>
</dbReference>
<dbReference type="InterPro" id="IPR006076">
    <property type="entry name" value="FAD-dep_OxRdtase"/>
</dbReference>
<dbReference type="InterPro" id="IPR036188">
    <property type="entry name" value="FAD/NAD-bd_sf"/>
</dbReference>
<dbReference type="InterPro" id="IPR000447">
    <property type="entry name" value="G3P_DH_FAD-dep"/>
</dbReference>
<dbReference type="NCBIfam" id="NF033461">
    <property type="entry name" value="glycerol3P_ox_1"/>
    <property type="match status" value="1"/>
</dbReference>
<dbReference type="PANTHER" id="PTHR11985:SF35">
    <property type="entry name" value="ANAEROBIC GLYCEROL-3-PHOSPHATE DEHYDROGENASE SUBUNIT A"/>
    <property type="match status" value="1"/>
</dbReference>
<dbReference type="PANTHER" id="PTHR11985">
    <property type="entry name" value="GLYCEROL-3-PHOSPHATE DEHYDROGENASE"/>
    <property type="match status" value="1"/>
</dbReference>
<dbReference type="Pfam" id="PF01266">
    <property type="entry name" value="DAO"/>
    <property type="match status" value="1"/>
</dbReference>
<dbReference type="Pfam" id="PF16901">
    <property type="entry name" value="DAO_C"/>
    <property type="match status" value="1"/>
</dbReference>
<dbReference type="PRINTS" id="PR01001">
    <property type="entry name" value="FADG3PDH"/>
</dbReference>
<dbReference type="SUPFAM" id="SSF54373">
    <property type="entry name" value="FAD-linked reductases, C-terminal domain"/>
    <property type="match status" value="1"/>
</dbReference>
<dbReference type="SUPFAM" id="SSF51905">
    <property type="entry name" value="FAD/NAD(P)-binding domain"/>
    <property type="match status" value="1"/>
</dbReference>
<dbReference type="PROSITE" id="PS00977">
    <property type="entry name" value="FAD_G3PDH_1"/>
    <property type="match status" value="1"/>
</dbReference>
<feature type="chain" id="PRO_0000126113" description="Alpha-glycerophosphate oxidase">
    <location>
        <begin position="1"/>
        <end position="612"/>
    </location>
</feature>
<feature type="region of interest" description="Disordered" evidence="3">
    <location>
        <begin position="398"/>
        <end position="418"/>
    </location>
</feature>
<feature type="compositionally biased region" description="Basic and acidic residues" evidence="3">
    <location>
        <begin position="398"/>
        <end position="408"/>
    </location>
</feature>
<feature type="binding site" evidence="2">
    <location>
        <begin position="21"/>
        <end position="49"/>
    </location>
    <ligand>
        <name>FAD</name>
        <dbReference type="ChEBI" id="CHEBI:57692"/>
    </ligand>
</feature>
<evidence type="ECO:0000250" key="1"/>
<evidence type="ECO:0000255" key="2"/>
<evidence type="ECO:0000256" key="3">
    <source>
        <dbReference type="SAM" id="MobiDB-lite"/>
    </source>
</evidence>
<evidence type="ECO:0000305" key="4"/>
<protein>
    <recommendedName>
        <fullName>Alpha-glycerophosphate oxidase</fullName>
        <ecNumber>1.1.3.21</ecNumber>
    </recommendedName>
    <alternativeName>
        <fullName>Glycerol-3-phosphate oxidase</fullName>
    </alternativeName>
</protein>
<organism>
    <name type="scientific">Streptococcus pyogenes serotype M18 (strain MGAS8232)</name>
    <dbReference type="NCBI Taxonomy" id="186103"/>
    <lineage>
        <taxon>Bacteria</taxon>
        <taxon>Bacillati</taxon>
        <taxon>Bacillota</taxon>
        <taxon>Bacilli</taxon>
        <taxon>Lactobacillales</taxon>
        <taxon>Streptococcaceae</taxon>
        <taxon>Streptococcus</taxon>
    </lineage>
</organism>
<proteinExistence type="inferred from homology"/>
<reference key="1">
    <citation type="journal article" date="2002" name="Proc. Natl. Acad. Sci. U.S.A.">
        <title>Genome sequence and comparative microarray analysis of serotype M18 group A Streptococcus strains associated with acute rheumatic fever outbreaks.</title>
        <authorList>
            <person name="Smoot J.C."/>
            <person name="Barbian K.D."/>
            <person name="Van Gompel J.J."/>
            <person name="Smoot L.M."/>
            <person name="Chaussee M.S."/>
            <person name="Sylva G.L."/>
            <person name="Sturdevant D.E."/>
            <person name="Ricklefs S.M."/>
            <person name="Porcella S.F."/>
            <person name="Parkins L.D."/>
            <person name="Beres S.B."/>
            <person name="Campbell D.S."/>
            <person name="Smith T.M."/>
            <person name="Zhang Q."/>
            <person name="Kapur V."/>
            <person name="Daly J.A."/>
            <person name="Veasy L.G."/>
            <person name="Musser J.M."/>
        </authorList>
    </citation>
    <scope>NUCLEOTIDE SEQUENCE [LARGE SCALE GENOMIC DNA]</scope>
    <source>
        <strain>MGAS8232</strain>
    </source>
</reference>
<comment type="catalytic activity">
    <reaction>
        <text>sn-glycerol 3-phosphate + O2 = dihydroxyacetone phosphate + H2O2</text>
        <dbReference type="Rhea" id="RHEA:18369"/>
        <dbReference type="ChEBI" id="CHEBI:15379"/>
        <dbReference type="ChEBI" id="CHEBI:16240"/>
        <dbReference type="ChEBI" id="CHEBI:57597"/>
        <dbReference type="ChEBI" id="CHEBI:57642"/>
        <dbReference type="EC" id="1.1.3.21"/>
    </reaction>
</comment>
<comment type="cofactor">
    <cofactor evidence="1">
        <name>FAD</name>
        <dbReference type="ChEBI" id="CHEBI:57692"/>
    </cofactor>
</comment>
<comment type="subcellular location">
    <subcellularLocation>
        <location evidence="1">Cytoplasm</location>
    </subcellularLocation>
</comment>
<comment type="similarity">
    <text evidence="4">Belongs to the FAD-dependent glycerol-3-phosphate dehydrogenase family.</text>
</comment>
<comment type="caution">
    <text evidence="4">As S.pyogenes is unable to produce acid from glycerol, the significance and/or function of the glpO gene in this organism is at present unknown.</text>
</comment>